<protein>
    <recommendedName>
        <fullName evidence="1">Dolichyl pyrophosphate Glc1Man9GlcNAc2 alpha-1,3-glucosyltransferase</fullName>
        <ecNumber evidence="1">2.4.1.265</ecNumber>
    </recommendedName>
    <alternativeName>
        <fullName>Asparagine-linked glycosylation protein 8</fullName>
    </alternativeName>
    <alternativeName>
        <fullName>Dol-P-Glc:Glc(1)Man(9)GlcNAc(2)-PP-dolichyl alpha-1,3-glucosyltransferase</fullName>
    </alternativeName>
    <alternativeName>
        <fullName>Dolichyl-P-Glc:Glc1Man9GlcNAc2-PP-dolichyl glucosyltransferase</fullName>
    </alternativeName>
</protein>
<comment type="function">
    <text evidence="1">Dolichyl pyrophosphate Glc1Man9GlcNAc2 alpha-1,3-glucosyltransferase that operates in the biosynthetic pathway of dolichol-linked oligosaccharides, the glycan precursors employed in protein asparagine (N)-glycosylation. The assembly of dolichol-linked oligosaccharides begins on the cytosolic side of the endoplasmic reticulum membrane and finishes in its lumen. The sequential addition of sugars to dolichol pyrophosphate produces dolichol-linked oligosaccharides containing fourteen sugars, including two GlcNAcs, nine mannoses and three glucoses. Once assembled, the oligosaccharide is transferred from the lipid to nascent proteins by oligosaccharyltransferases. In the lumen of the endoplasmic reticulum, adds the second glucose residue from dolichyl phosphate glucose (Dol-P-Glc) onto the lipid-linked oligosaccharide intermediate Glc(1)Man(9)GlcNAc(2)-PP-Dol to produce Glc(2)Man(9)GlcNAc(2)-PP-Dol.</text>
</comment>
<comment type="catalytic activity">
    <reaction evidence="1">
        <text>an alpha-D-Glc-(1-&gt;3)-alpha-D-Man-(1-&gt;2)-alpha-D-Man-(1-&gt;2)-alpha-D-Man-(1-&gt;3)-[alpha-D-Man-(1-&gt;2)-alpha-D-Man-(1-&gt;3)-[alpha-D-Man-(1-&gt;2)-alpha-D-Man-(1-&gt;6)]-alpha-D-Man-(1-&gt;6)]-beta-D-Man-(1-&gt;4)-beta-D-GlcNAc-(1-&gt;4)-alpha-D-GlcNAc-diphospho-di-trans,poly-cis-dolichol + a di-trans,poly-cis-dolichyl beta-D-glucosyl phosphate = an alpha-D-Glc-(1-&gt;3)-alpha-D-Glc-(1-&gt;3)-alpha-D-Man-(1-&gt;2)-alpha-D-Man-(1-&gt;2)-alpha-D-Man-(1-&gt;3)-[alpha-D-Man-(1-&gt;2)-alpha-D-Man-(1-&gt;3)-[alpha-D-Man-(1-&gt;2)-alpha-D-Man-(1-&gt;6)]-alpha-D-Man-(1-&gt;6)]-beta-D-Man-(1-&gt;4)-beta-D-GlcNAc-(1-&gt;4)-alpha-D-GlcNAc-diphospho-di-trans,poly-cis-dolichol + a di-trans,poly-cis-dolichyl phosphate + H(+)</text>
        <dbReference type="Rhea" id="RHEA:31307"/>
        <dbReference type="Rhea" id="RHEA-COMP:19498"/>
        <dbReference type="Rhea" id="RHEA-COMP:19502"/>
        <dbReference type="Rhea" id="RHEA-COMP:19521"/>
        <dbReference type="Rhea" id="RHEA-COMP:19522"/>
        <dbReference type="ChEBI" id="CHEBI:15378"/>
        <dbReference type="ChEBI" id="CHEBI:57525"/>
        <dbReference type="ChEBI" id="CHEBI:57683"/>
        <dbReference type="ChEBI" id="CHEBI:132521"/>
        <dbReference type="ChEBI" id="CHEBI:132522"/>
        <dbReference type="EC" id="2.4.1.265"/>
    </reaction>
    <physiologicalReaction direction="left-to-right" evidence="1">
        <dbReference type="Rhea" id="RHEA:31308"/>
    </physiologicalReaction>
</comment>
<comment type="pathway">
    <text evidence="1">Protein modification; protein glycosylation.</text>
</comment>
<comment type="subcellular location">
    <subcellularLocation>
        <location evidence="1">Endoplasmic reticulum membrane</location>
        <topology evidence="2">Multi-pass membrane protein</topology>
    </subcellularLocation>
</comment>
<comment type="similarity">
    <text evidence="3">Belongs to the ALG6/ALG8 glucosyltransferase family.</text>
</comment>
<reference key="1">
    <citation type="journal article" date="2003" name="Nature">
        <title>The genome sequence of the filamentous fungus Neurospora crassa.</title>
        <authorList>
            <person name="Galagan J.E."/>
            <person name="Calvo S.E."/>
            <person name="Borkovich K.A."/>
            <person name="Selker E.U."/>
            <person name="Read N.D."/>
            <person name="Jaffe D.B."/>
            <person name="FitzHugh W."/>
            <person name="Ma L.-J."/>
            <person name="Smirnov S."/>
            <person name="Purcell S."/>
            <person name="Rehman B."/>
            <person name="Elkins T."/>
            <person name="Engels R."/>
            <person name="Wang S."/>
            <person name="Nielsen C.B."/>
            <person name="Butler J."/>
            <person name="Endrizzi M."/>
            <person name="Qui D."/>
            <person name="Ianakiev P."/>
            <person name="Bell-Pedersen D."/>
            <person name="Nelson M.A."/>
            <person name="Werner-Washburne M."/>
            <person name="Selitrennikoff C.P."/>
            <person name="Kinsey J.A."/>
            <person name="Braun E.L."/>
            <person name="Zelter A."/>
            <person name="Schulte U."/>
            <person name="Kothe G.O."/>
            <person name="Jedd G."/>
            <person name="Mewes H.-W."/>
            <person name="Staben C."/>
            <person name="Marcotte E."/>
            <person name="Greenberg D."/>
            <person name="Roy A."/>
            <person name="Foley K."/>
            <person name="Naylor J."/>
            <person name="Stange-Thomann N."/>
            <person name="Barrett R."/>
            <person name="Gnerre S."/>
            <person name="Kamal M."/>
            <person name="Kamvysselis M."/>
            <person name="Mauceli E.W."/>
            <person name="Bielke C."/>
            <person name="Rudd S."/>
            <person name="Frishman D."/>
            <person name="Krystofova S."/>
            <person name="Rasmussen C."/>
            <person name="Metzenberg R.L."/>
            <person name="Perkins D.D."/>
            <person name="Kroken S."/>
            <person name="Cogoni C."/>
            <person name="Macino G."/>
            <person name="Catcheside D.E.A."/>
            <person name="Li W."/>
            <person name="Pratt R.J."/>
            <person name="Osmani S.A."/>
            <person name="DeSouza C.P.C."/>
            <person name="Glass N.L."/>
            <person name="Orbach M.J."/>
            <person name="Berglund J.A."/>
            <person name="Voelker R."/>
            <person name="Yarden O."/>
            <person name="Plamann M."/>
            <person name="Seiler S."/>
            <person name="Dunlap J.C."/>
            <person name="Radford A."/>
            <person name="Aramayo R."/>
            <person name="Natvig D.O."/>
            <person name="Alex L.A."/>
            <person name="Mannhaupt G."/>
            <person name="Ebbole D.J."/>
            <person name="Freitag M."/>
            <person name="Paulsen I."/>
            <person name="Sachs M.S."/>
            <person name="Lander E.S."/>
            <person name="Nusbaum C."/>
            <person name="Birren B.W."/>
        </authorList>
    </citation>
    <scope>NUCLEOTIDE SEQUENCE [LARGE SCALE GENOMIC DNA]</scope>
    <source>
        <strain>ATCC 24698 / 74-OR23-1A / CBS 708.71 / DSM 1257 / FGSC 987</strain>
    </source>
</reference>
<feature type="chain" id="PRO_0000278336" description="Dolichyl pyrophosphate Glc1Man9GlcNAc2 alpha-1,3-glucosyltransferase">
    <location>
        <begin position="1"/>
        <end position="505"/>
    </location>
</feature>
<feature type="topological domain" description="Lumenal" evidence="2">
    <location>
        <begin position="1"/>
        <end position="3"/>
    </location>
</feature>
<feature type="transmembrane region" description="Helical" evidence="2">
    <location>
        <begin position="4"/>
        <end position="24"/>
    </location>
</feature>
<feature type="topological domain" description="Cytoplasmic" evidence="2">
    <location>
        <begin position="25"/>
        <end position="101"/>
    </location>
</feature>
<feature type="transmembrane region" description="Helical" evidence="2">
    <location>
        <begin position="102"/>
        <end position="122"/>
    </location>
</feature>
<feature type="topological domain" description="Lumenal" evidence="2">
    <location>
        <begin position="123"/>
        <end position="128"/>
    </location>
</feature>
<feature type="transmembrane region" description="Helical" evidence="2">
    <location>
        <begin position="129"/>
        <end position="149"/>
    </location>
</feature>
<feature type="topological domain" description="Cytoplasmic" evidence="2">
    <location>
        <begin position="150"/>
        <end position="152"/>
    </location>
</feature>
<feature type="transmembrane region" description="Helical" evidence="2">
    <location>
        <begin position="153"/>
        <end position="169"/>
    </location>
</feature>
<feature type="topological domain" description="Lumenal" evidence="2">
    <location>
        <begin position="170"/>
        <end position="173"/>
    </location>
</feature>
<feature type="transmembrane region" description="Helical" evidence="2">
    <location>
        <begin position="174"/>
        <end position="194"/>
    </location>
</feature>
<feature type="topological domain" description="Cytoplasmic" evidence="2">
    <location>
        <begin position="195"/>
        <end position="224"/>
    </location>
</feature>
<feature type="transmembrane region" description="Helical" evidence="2">
    <location>
        <begin position="225"/>
        <end position="245"/>
    </location>
</feature>
<feature type="topological domain" description="Lumenal" evidence="2">
    <location>
        <begin position="246"/>
        <end position="319"/>
    </location>
</feature>
<feature type="transmembrane region" description="Helical" evidence="2">
    <location>
        <begin position="320"/>
        <end position="340"/>
    </location>
</feature>
<feature type="topological domain" description="Cytoplasmic" evidence="2">
    <location>
        <begin position="341"/>
        <end position="359"/>
    </location>
</feature>
<feature type="transmembrane region" description="Helical" evidence="2">
    <location>
        <begin position="360"/>
        <end position="380"/>
    </location>
</feature>
<feature type="topological domain" description="Lumenal" evidence="2">
    <location>
        <begin position="381"/>
        <end position="386"/>
    </location>
</feature>
<feature type="transmembrane region" description="Helical" evidence="2">
    <location>
        <begin position="387"/>
        <end position="407"/>
    </location>
</feature>
<feature type="topological domain" description="Cytoplasmic" evidence="2">
    <location>
        <begin position="408"/>
        <end position="409"/>
    </location>
</feature>
<feature type="transmembrane region" description="Helical" evidence="2">
    <location>
        <begin position="410"/>
        <end position="430"/>
    </location>
</feature>
<feature type="topological domain" description="Lumenal" evidence="2">
    <location>
        <begin position="431"/>
        <end position="450"/>
    </location>
</feature>
<feature type="transmembrane region" description="Helical" evidence="2">
    <location>
        <begin position="451"/>
        <end position="471"/>
    </location>
</feature>
<feature type="topological domain" description="Cytoplasmic" evidence="2">
    <location>
        <begin position="472"/>
        <end position="480"/>
    </location>
</feature>
<feature type="transmembrane region" description="Helical" evidence="2">
    <location>
        <begin position="481"/>
        <end position="501"/>
    </location>
</feature>
<feature type="topological domain" description="Lumenal" evidence="2">
    <location>
        <begin position="502"/>
        <end position="505"/>
    </location>
</feature>
<proteinExistence type="inferred from homology"/>
<gene>
    <name type="primary">alg-8</name>
    <name type="ORF">NCU00163</name>
</gene>
<name>ALG8_NEUCR</name>
<sequence length="505" mass="57417">MAEIYPSLVQCAIVATAFKVLLFPAYKSTDFEVHRNWLAITHSLPLWEWYYEKTSEWTLDYPPFFAYFEWIMSQVARLADPAMIWVHNLEYDSWQTVYFQRWTVIVTELVLLYALQMFVDSTPGVSKRAAHAAAVSILLSPGLLIIDHIHFQYNGVMYGILIASLVLAKKKSSLLASGLVFAALLCMKHIYLYLAPAYFVYLLRVYCLPPKLSPRSIFRIQFFNCVKLGGGIAAIFAAAFGPFALKNQIPQIFSRLFPFSRGLCHAYWAPNVWALYSFMDRLLISLAPRIGLPIKADALNSVTRGLVGDTSFAVLPDITPRMCFVLTLLFQAIPLIKLFMRPTWEGFIGGVTLCGYASFLFGWHVHEKAILLVIIPFSLIALKDRRYLGAFRPLAVAGHVSLFPLIFTPAEFPIKTVYTIFWLVLFLMAFDRLAPAPTRQRLFLFDRFSTAYITVSIPLIFYCSLMHGIIFGKSYEFLPLMFTSSYSAIGVVGSWLGFMVVYFTE</sequence>
<organism>
    <name type="scientific">Neurospora crassa (strain ATCC 24698 / 74-OR23-1A / CBS 708.71 / DSM 1257 / FGSC 987)</name>
    <dbReference type="NCBI Taxonomy" id="367110"/>
    <lineage>
        <taxon>Eukaryota</taxon>
        <taxon>Fungi</taxon>
        <taxon>Dikarya</taxon>
        <taxon>Ascomycota</taxon>
        <taxon>Pezizomycotina</taxon>
        <taxon>Sordariomycetes</taxon>
        <taxon>Sordariomycetidae</taxon>
        <taxon>Sordariales</taxon>
        <taxon>Sordariaceae</taxon>
        <taxon>Neurospora</taxon>
    </lineage>
</organism>
<evidence type="ECO:0000250" key="1">
    <source>
        <dbReference type="UniProtKB" id="P40351"/>
    </source>
</evidence>
<evidence type="ECO:0000255" key="2"/>
<evidence type="ECO:0000305" key="3"/>
<keyword id="KW-0256">Endoplasmic reticulum</keyword>
<keyword id="KW-0328">Glycosyltransferase</keyword>
<keyword id="KW-0472">Membrane</keyword>
<keyword id="KW-1185">Reference proteome</keyword>
<keyword id="KW-0808">Transferase</keyword>
<keyword id="KW-0812">Transmembrane</keyword>
<keyword id="KW-1133">Transmembrane helix</keyword>
<accession>Q7RXP5</accession>
<dbReference type="EC" id="2.4.1.265" evidence="1"/>
<dbReference type="EMBL" id="CM002238">
    <property type="protein sequence ID" value="EAA27440.2"/>
    <property type="molecule type" value="Genomic_DNA"/>
</dbReference>
<dbReference type="RefSeq" id="XP_956676.2">
    <property type="nucleotide sequence ID" value="XM_951583.2"/>
</dbReference>
<dbReference type="SMR" id="Q7RXP5"/>
<dbReference type="FunCoup" id="Q7RXP5">
    <property type="interactions" value="761"/>
</dbReference>
<dbReference type="STRING" id="367110.Q7RXP5"/>
<dbReference type="CAZy" id="GT57">
    <property type="family name" value="Glycosyltransferase Family 57"/>
</dbReference>
<dbReference type="PaxDb" id="5141-EFNCRP00000000197"/>
<dbReference type="EnsemblFungi" id="EAA27440">
    <property type="protein sequence ID" value="EAA27440"/>
    <property type="gene ID" value="NCU00163"/>
</dbReference>
<dbReference type="GeneID" id="3872823"/>
<dbReference type="KEGG" id="ncr:NCU00163"/>
<dbReference type="VEuPathDB" id="FungiDB:NCU00163"/>
<dbReference type="HOGENOM" id="CLU_022045_1_1_1"/>
<dbReference type="InParanoid" id="Q7RXP5"/>
<dbReference type="OrthoDB" id="1689333at2759"/>
<dbReference type="UniPathway" id="UPA00378"/>
<dbReference type="Proteomes" id="UP000001805">
    <property type="component" value="Chromosome 3, Linkage Group III"/>
</dbReference>
<dbReference type="GO" id="GO:0005789">
    <property type="term" value="C:endoplasmic reticulum membrane"/>
    <property type="evidence" value="ECO:0000250"/>
    <property type="project" value="UniProtKB"/>
</dbReference>
<dbReference type="GO" id="GO:0042283">
    <property type="term" value="F:dolichyl pyrophosphate Glc1Man9GlcNAc2 alpha-1,3-glucosyltransferase activity"/>
    <property type="evidence" value="ECO:0000250"/>
    <property type="project" value="UniProtKB"/>
</dbReference>
<dbReference type="GO" id="GO:0006488">
    <property type="term" value="P:dolichol-linked oligosaccharide biosynthetic process"/>
    <property type="evidence" value="ECO:0000250"/>
    <property type="project" value="UniProtKB"/>
</dbReference>
<dbReference type="GO" id="GO:0006487">
    <property type="term" value="P:protein N-linked glycosylation"/>
    <property type="evidence" value="ECO:0000250"/>
    <property type="project" value="UniProtKB"/>
</dbReference>
<dbReference type="InterPro" id="IPR004856">
    <property type="entry name" value="Glyco_trans_ALG6/ALG8"/>
</dbReference>
<dbReference type="PANTHER" id="PTHR12413">
    <property type="entry name" value="DOLICHYL GLYCOSYLTRANSFERASE"/>
    <property type="match status" value="1"/>
</dbReference>
<dbReference type="PANTHER" id="PTHR12413:SF2">
    <property type="entry name" value="DOLICHYL PYROPHOSPHATE GLC1MAN9GLCNAC2 ALPHA-1,3-GLUCOSYLTRANSFERASE-RELATED"/>
    <property type="match status" value="1"/>
</dbReference>
<dbReference type="Pfam" id="PF03155">
    <property type="entry name" value="Alg6_Alg8"/>
    <property type="match status" value="1"/>
</dbReference>